<accession>A1L2G3</accession>
<accession>Q1LXB5</accession>
<evidence type="ECO:0000250" key="1">
    <source>
        <dbReference type="UniProtKB" id="Q92560"/>
    </source>
</evidence>
<evidence type="ECO:0000255" key="2">
    <source>
        <dbReference type="PROSITE-ProRule" id="PRU01393"/>
    </source>
</evidence>
<evidence type="ECO:0000255" key="3">
    <source>
        <dbReference type="PROSITE-ProRule" id="PRU01394"/>
    </source>
</evidence>
<evidence type="ECO:0000256" key="4">
    <source>
        <dbReference type="SAM" id="MobiDB-lite"/>
    </source>
</evidence>
<evidence type="ECO:0000269" key="5">
    <source>
    </source>
</evidence>
<evidence type="ECO:0000305" key="6"/>
<protein>
    <recommendedName>
        <fullName>Ubiquitin carboxyl-terminal hydrolase BAP1</fullName>
        <ecNumber evidence="1">3.4.19.12</ecNumber>
    </recommendedName>
    <alternativeName>
        <fullName>BRCA1-associated protein 1</fullName>
    </alternativeName>
</protein>
<gene>
    <name type="primary">bap1</name>
    <name type="ORF">si:dkey-42i9.9</name>
</gene>
<organism>
    <name type="scientific">Danio rerio</name>
    <name type="common">Zebrafish</name>
    <name type="synonym">Brachydanio rerio</name>
    <dbReference type="NCBI Taxonomy" id="7955"/>
    <lineage>
        <taxon>Eukaryota</taxon>
        <taxon>Metazoa</taxon>
        <taxon>Chordata</taxon>
        <taxon>Craniata</taxon>
        <taxon>Vertebrata</taxon>
        <taxon>Euteleostomi</taxon>
        <taxon>Actinopterygii</taxon>
        <taxon>Neopterygii</taxon>
        <taxon>Teleostei</taxon>
        <taxon>Ostariophysi</taxon>
        <taxon>Cypriniformes</taxon>
        <taxon>Danionidae</taxon>
        <taxon>Danioninae</taxon>
        <taxon>Danio</taxon>
    </lineage>
</organism>
<proteinExistence type="evidence at transcript level"/>
<feature type="chain" id="PRO_0000395819" description="Ubiquitin carboxyl-terminal hydrolase BAP1">
    <location>
        <begin position="1"/>
        <end position="755"/>
    </location>
</feature>
<feature type="domain" description="UCH catalytic" evidence="2">
    <location>
        <begin position="4"/>
        <end position="235"/>
    </location>
</feature>
<feature type="domain" description="ULD" evidence="3">
    <location>
        <begin position="696"/>
        <end position="724"/>
    </location>
</feature>
<feature type="region of interest" description="Disordered" evidence="4">
    <location>
        <begin position="270"/>
        <end position="354"/>
    </location>
</feature>
<feature type="region of interest" description="Disordered" evidence="4">
    <location>
        <begin position="368"/>
        <end position="415"/>
    </location>
</feature>
<feature type="region of interest" description="Disordered" evidence="4">
    <location>
        <begin position="469"/>
        <end position="535"/>
    </location>
</feature>
<feature type="region of interest" description="Disordered" evidence="4">
    <location>
        <begin position="593"/>
        <end position="652"/>
    </location>
</feature>
<feature type="region of interest" description="Disordered" evidence="4">
    <location>
        <begin position="729"/>
        <end position="755"/>
    </location>
</feature>
<feature type="short sequence motif" description="Nuclear localization signal" evidence="1">
    <location>
        <begin position="743"/>
        <end position="748"/>
    </location>
</feature>
<feature type="compositionally biased region" description="Pro residues" evidence="4">
    <location>
        <begin position="342"/>
        <end position="351"/>
    </location>
</feature>
<feature type="compositionally biased region" description="Acidic residues" evidence="4">
    <location>
        <begin position="396"/>
        <end position="409"/>
    </location>
</feature>
<feature type="compositionally biased region" description="Polar residues" evidence="4">
    <location>
        <begin position="483"/>
        <end position="530"/>
    </location>
</feature>
<feature type="compositionally biased region" description="Basic and acidic residues" evidence="4">
    <location>
        <begin position="593"/>
        <end position="602"/>
    </location>
</feature>
<feature type="compositionally biased region" description="Basic and acidic residues" evidence="4">
    <location>
        <begin position="612"/>
        <end position="636"/>
    </location>
</feature>
<feature type="compositionally biased region" description="Polar residues" evidence="4">
    <location>
        <begin position="637"/>
        <end position="647"/>
    </location>
</feature>
<feature type="active site" description="Nucleophile" evidence="2">
    <location>
        <position position="91"/>
    </location>
</feature>
<feature type="active site" description="Proton donor" evidence="2">
    <location>
        <position position="169"/>
    </location>
</feature>
<feature type="site" description="Transition state stabilizer" evidence="2">
    <location>
        <position position="85"/>
    </location>
</feature>
<feature type="site" description="Important for enzyme activity" evidence="2">
    <location>
        <position position="184"/>
    </location>
</feature>
<feature type="sequence conflict" description="In Ref. 2; AAI29507." evidence="6" ref="2">
    <original>E</original>
    <variation>G</variation>
    <location>
        <position position="54"/>
    </location>
</feature>
<feature type="sequence conflict" description="In Ref. 2; AAI29507." evidence="6" ref="2">
    <original>T</original>
    <variation>A</variation>
    <location>
        <position position="111"/>
    </location>
</feature>
<feature type="sequence conflict" description="In Ref. 2; AAI29507." evidence="6" ref="2">
    <original>G</original>
    <variation>D</variation>
    <location>
        <position position="443"/>
    </location>
</feature>
<feature type="sequence conflict" description="In Ref. 2; AAI29507." evidence="6" ref="2">
    <original>S</original>
    <variation>P</variation>
    <location>
        <position position="504"/>
    </location>
</feature>
<feature type="sequence conflict" description="In Ref. 2; AAI29507." evidence="6" ref="2">
    <original>VEM</original>
    <variation>AEI</variation>
    <location>
        <begin position="617"/>
        <end position="619"/>
    </location>
</feature>
<feature type="sequence conflict" description="In Ref. 2; AAI29507." evidence="6" ref="2">
    <original>S</original>
    <variation>L</variation>
    <location>
        <position position="627"/>
    </location>
</feature>
<keyword id="KW-0156">Chromatin regulator</keyword>
<keyword id="KW-0963">Cytoplasm</keyword>
<keyword id="KW-0378">Hydrolase</keyword>
<keyword id="KW-0539">Nucleus</keyword>
<keyword id="KW-0645">Protease</keyword>
<keyword id="KW-1185">Reference proteome</keyword>
<keyword id="KW-0788">Thiol protease</keyword>
<keyword id="KW-0833">Ubl conjugation pathway</keyword>
<comment type="function">
    <text evidence="1">Deubiquitinating enzyme that plays a key role in chromatin by mediating deubiquitination of histone H2A. Catalytic component of the PR-DUB complex, a complex that specifically mediates deubiquitination of histone H2A monoubiquitinated at 'Lys-119' (H2AK119ub1) (By similarity).</text>
</comment>
<comment type="catalytic activity">
    <reaction evidence="1">
        <text>Thiol-dependent hydrolysis of ester, thioester, amide, peptide and isopeptide bonds formed by the C-terminal Gly of ubiquitin (a 76-residue protein attached to proteins as an intracellular targeting signal).</text>
        <dbReference type="EC" id="3.4.19.12"/>
    </reaction>
</comment>
<comment type="subunit">
    <text evidence="1">Component of the PR-DUB complex.</text>
</comment>
<comment type="subcellular location">
    <subcellularLocation>
        <location evidence="1">Cytoplasm</location>
    </subcellularLocation>
    <subcellularLocation>
        <location evidence="1">Nucleus</location>
    </subcellularLocation>
    <text evidence="1">Mainly nuclear. Binds to chromatin.</text>
</comment>
<comment type="disruption phenotype">
    <text evidence="5">Neuronal hyperplasia, suggesting a role in Notch signaling pathway.</text>
</comment>
<comment type="similarity">
    <text evidence="6">Belongs to the peptidase C12 family. BAP1 subfamily.</text>
</comment>
<comment type="sequence caution" evidence="6">
    <conflict type="miscellaneous discrepancy">
        <sequence resource="EMBL-CDS" id="AAI29507"/>
    </conflict>
    <text>Contaminating sequence. Potential poly-A sequence.</text>
</comment>
<comment type="sequence caution" evidence="6">
    <conflict type="erroneous gene model prediction">
        <sequence resource="EMBL-CDS" id="CAK11034"/>
    </conflict>
</comment>
<dbReference type="EC" id="3.4.19.12" evidence="1"/>
<dbReference type="EMBL" id="BX465868">
    <property type="protein sequence ID" value="CAK11034.1"/>
    <property type="status" value="ALT_SEQ"/>
    <property type="molecule type" value="Genomic_DNA"/>
</dbReference>
<dbReference type="EMBL" id="BC129506">
    <property type="protein sequence ID" value="AAI29507.1"/>
    <property type="status" value="ALT_SEQ"/>
    <property type="molecule type" value="mRNA"/>
</dbReference>
<dbReference type="SMR" id="A1L2G3"/>
<dbReference type="FunCoup" id="A1L2G3">
    <property type="interactions" value="1473"/>
</dbReference>
<dbReference type="STRING" id="7955.ENSDARP00000086210"/>
<dbReference type="MEROPS" id="C12.004"/>
<dbReference type="PaxDb" id="7955-ENSDARP00000086210"/>
<dbReference type="PeptideAtlas" id="A1L2G3"/>
<dbReference type="AGR" id="ZFIN:ZDB-GENE-050208-492"/>
<dbReference type="ZFIN" id="ZDB-GENE-050208-492">
    <property type="gene designation" value="bap1"/>
</dbReference>
<dbReference type="eggNOG" id="KOG2778">
    <property type="taxonomic scope" value="Eukaryota"/>
</dbReference>
<dbReference type="InParanoid" id="A1L2G3"/>
<dbReference type="PhylomeDB" id="A1L2G3"/>
<dbReference type="PRO" id="PR:A1L2G3"/>
<dbReference type="Proteomes" id="UP000000437">
    <property type="component" value="Unplaced"/>
</dbReference>
<dbReference type="GO" id="GO:0005737">
    <property type="term" value="C:cytoplasm"/>
    <property type="evidence" value="ECO:0000250"/>
    <property type="project" value="UniProtKB"/>
</dbReference>
<dbReference type="GO" id="GO:0005634">
    <property type="term" value="C:nucleus"/>
    <property type="evidence" value="ECO:0000250"/>
    <property type="project" value="UniProtKB"/>
</dbReference>
<dbReference type="GO" id="GO:0035517">
    <property type="term" value="C:PR-DUB complex"/>
    <property type="evidence" value="ECO:0000250"/>
    <property type="project" value="UniProtKB"/>
</dbReference>
<dbReference type="GO" id="GO:0003682">
    <property type="term" value="F:chromatin binding"/>
    <property type="evidence" value="ECO:0000250"/>
    <property type="project" value="UniProtKB"/>
</dbReference>
<dbReference type="GO" id="GO:0004843">
    <property type="term" value="F:cysteine-type deubiquitinase activity"/>
    <property type="evidence" value="ECO:0000250"/>
    <property type="project" value="UniProtKB"/>
</dbReference>
<dbReference type="GO" id="GO:1904888">
    <property type="term" value="P:cranial skeletal system development"/>
    <property type="evidence" value="ECO:0000315"/>
    <property type="project" value="ZFIN"/>
</dbReference>
<dbReference type="GO" id="GO:0031507">
    <property type="term" value="P:heterochromatin formation"/>
    <property type="evidence" value="ECO:0000318"/>
    <property type="project" value="GO_Central"/>
</dbReference>
<dbReference type="GO" id="GO:0045892">
    <property type="term" value="P:negative regulation of DNA-templated transcription"/>
    <property type="evidence" value="ECO:0000250"/>
    <property type="project" value="UniProtKB"/>
</dbReference>
<dbReference type="GO" id="GO:0007219">
    <property type="term" value="P:Notch signaling pathway"/>
    <property type="evidence" value="ECO:0000315"/>
    <property type="project" value="ZFIN"/>
</dbReference>
<dbReference type="GO" id="GO:0016579">
    <property type="term" value="P:protein deubiquitination"/>
    <property type="evidence" value="ECO:0000250"/>
    <property type="project" value="UniProtKB"/>
</dbReference>
<dbReference type="GO" id="GO:0071108">
    <property type="term" value="P:protein K48-linked deubiquitination"/>
    <property type="evidence" value="ECO:0000250"/>
    <property type="project" value="UniProtKB"/>
</dbReference>
<dbReference type="GO" id="GO:0051726">
    <property type="term" value="P:regulation of cell cycle"/>
    <property type="evidence" value="ECO:0000250"/>
    <property type="project" value="UniProtKB"/>
</dbReference>
<dbReference type="GO" id="GO:0001558">
    <property type="term" value="P:regulation of cell growth"/>
    <property type="evidence" value="ECO:0000250"/>
    <property type="project" value="UniProtKB"/>
</dbReference>
<dbReference type="GO" id="GO:0006511">
    <property type="term" value="P:ubiquitin-dependent protein catabolic process"/>
    <property type="evidence" value="ECO:0007669"/>
    <property type="project" value="InterPro"/>
</dbReference>
<dbReference type="CDD" id="cd09617">
    <property type="entry name" value="Peptidase_C12_UCH37_BAP1"/>
    <property type="match status" value="1"/>
</dbReference>
<dbReference type="FunFam" id="3.40.532.10:FF:000002">
    <property type="entry name" value="Ubiquitin carboxyl-terminal hydrolase"/>
    <property type="match status" value="1"/>
</dbReference>
<dbReference type="Gene3D" id="1.20.58.860">
    <property type="match status" value="1"/>
</dbReference>
<dbReference type="Gene3D" id="3.40.532.10">
    <property type="entry name" value="Peptidase C12, ubiquitin carboxyl-terminal hydrolase"/>
    <property type="match status" value="1"/>
</dbReference>
<dbReference type="InterPro" id="IPR038765">
    <property type="entry name" value="Papain-like_cys_pep_sf"/>
</dbReference>
<dbReference type="InterPro" id="IPR001578">
    <property type="entry name" value="Peptidase_C12_UCH"/>
</dbReference>
<dbReference type="InterPro" id="IPR036959">
    <property type="entry name" value="Peptidase_C12_UCH_sf"/>
</dbReference>
<dbReference type="InterPro" id="IPR041507">
    <property type="entry name" value="UCH_C"/>
</dbReference>
<dbReference type="PANTHER" id="PTHR10589">
    <property type="entry name" value="UBIQUITIN CARBOXYL-TERMINAL HYDROLASE"/>
    <property type="match status" value="1"/>
</dbReference>
<dbReference type="PANTHER" id="PTHR10589:SF28">
    <property type="entry name" value="UBIQUITIN CARBOXYL-TERMINAL HYDROLASE BAP1"/>
    <property type="match status" value="1"/>
</dbReference>
<dbReference type="Pfam" id="PF01088">
    <property type="entry name" value="Peptidase_C12"/>
    <property type="match status" value="1"/>
</dbReference>
<dbReference type="Pfam" id="PF18031">
    <property type="entry name" value="UCH_C"/>
    <property type="match status" value="1"/>
</dbReference>
<dbReference type="PRINTS" id="PR00707">
    <property type="entry name" value="UBCTHYDRLASE"/>
</dbReference>
<dbReference type="SUPFAM" id="SSF54001">
    <property type="entry name" value="Cysteine proteinases"/>
    <property type="match status" value="1"/>
</dbReference>
<dbReference type="PROSITE" id="PS52048">
    <property type="entry name" value="UCH_DOMAIN"/>
    <property type="match status" value="1"/>
</dbReference>
<dbReference type="PROSITE" id="PS52049">
    <property type="entry name" value="ULD"/>
    <property type="match status" value="1"/>
</dbReference>
<reference key="1">
    <citation type="journal article" date="2013" name="Nature">
        <title>The zebrafish reference genome sequence and its relationship to the human genome.</title>
        <authorList>
            <person name="Howe K."/>
            <person name="Clark M.D."/>
            <person name="Torroja C.F."/>
            <person name="Torrance J."/>
            <person name="Berthelot C."/>
            <person name="Muffato M."/>
            <person name="Collins J.E."/>
            <person name="Humphray S."/>
            <person name="McLaren K."/>
            <person name="Matthews L."/>
            <person name="McLaren S."/>
            <person name="Sealy I."/>
            <person name="Caccamo M."/>
            <person name="Churcher C."/>
            <person name="Scott C."/>
            <person name="Barrett J.C."/>
            <person name="Koch R."/>
            <person name="Rauch G.J."/>
            <person name="White S."/>
            <person name="Chow W."/>
            <person name="Kilian B."/>
            <person name="Quintais L.T."/>
            <person name="Guerra-Assuncao J.A."/>
            <person name="Zhou Y."/>
            <person name="Gu Y."/>
            <person name="Yen J."/>
            <person name="Vogel J.H."/>
            <person name="Eyre T."/>
            <person name="Redmond S."/>
            <person name="Banerjee R."/>
            <person name="Chi J."/>
            <person name="Fu B."/>
            <person name="Langley E."/>
            <person name="Maguire S.F."/>
            <person name="Laird G.K."/>
            <person name="Lloyd D."/>
            <person name="Kenyon E."/>
            <person name="Donaldson S."/>
            <person name="Sehra H."/>
            <person name="Almeida-King J."/>
            <person name="Loveland J."/>
            <person name="Trevanion S."/>
            <person name="Jones M."/>
            <person name="Quail M."/>
            <person name="Willey D."/>
            <person name="Hunt A."/>
            <person name="Burton J."/>
            <person name="Sims S."/>
            <person name="McLay K."/>
            <person name="Plumb B."/>
            <person name="Davis J."/>
            <person name="Clee C."/>
            <person name="Oliver K."/>
            <person name="Clark R."/>
            <person name="Riddle C."/>
            <person name="Elliot D."/>
            <person name="Threadgold G."/>
            <person name="Harden G."/>
            <person name="Ware D."/>
            <person name="Begum S."/>
            <person name="Mortimore B."/>
            <person name="Kerry G."/>
            <person name="Heath P."/>
            <person name="Phillimore B."/>
            <person name="Tracey A."/>
            <person name="Corby N."/>
            <person name="Dunn M."/>
            <person name="Johnson C."/>
            <person name="Wood J."/>
            <person name="Clark S."/>
            <person name="Pelan S."/>
            <person name="Griffiths G."/>
            <person name="Smith M."/>
            <person name="Glithero R."/>
            <person name="Howden P."/>
            <person name="Barker N."/>
            <person name="Lloyd C."/>
            <person name="Stevens C."/>
            <person name="Harley J."/>
            <person name="Holt K."/>
            <person name="Panagiotidis G."/>
            <person name="Lovell J."/>
            <person name="Beasley H."/>
            <person name="Henderson C."/>
            <person name="Gordon D."/>
            <person name="Auger K."/>
            <person name="Wright D."/>
            <person name="Collins J."/>
            <person name="Raisen C."/>
            <person name="Dyer L."/>
            <person name="Leung K."/>
            <person name="Robertson L."/>
            <person name="Ambridge K."/>
            <person name="Leongamornlert D."/>
            <person name="McGuire S."/>
            <person name="Gilderthorp R."/>
            <person name="Griffiths C."/>
            <person name="Manthravadi D."/>
            <person name="Nichol S."/>
            <person name="Barker G."/>
            <person name="Whitehead S."/>
            <person name="Kay M."/>
            <person name="Brown J."/>
            <person name="Murnane C."/>
            <person name="Gray E."/>
            <person name="Humphries M."/>
            <person name="Sycamore N."/>
            <person name="Barker D."/>
            <person name="Saunders D."/>
            <person name="Wallis J."/>
            <person name="Babbage A."/>
            <person name="Hammond S."/>
            <person name="Mashreghi-Mohammadi M."/>
            <person name="Barr L."/>
            <person name="Martin S."/>
            <person name="Wray P."/>
            <person name="Ellington A."/>
            <person name="Matthews N."/>
            <person name="Ellwood M."/>
            <person name="Woodmansey R."/>
            <person name="Clark G."/>
            <person name="Cooper J."/>
            <person name="Tromans A."/>
            <person name="Grafham D."/>
            <person name="Skuce C."/>
            <person name="Pandian R."/>
            <person name="Andrews R."/>
            <person name="Harrison E."/>
            <person name="Kimberley A."/>
            <person name="Garnett J."/>
            <person name="Fosker N."/>
            <person name="Hall R."/>
            <person name="Garner P."/>
            <person name="Kelly D."/>
            <person name="Bird C."/>
            <person name="Palmer S."/>
            <person name="Gehring I."/>
            <person name="Berger A."/>
            <person name="Dooley C.M."/>
            <person name="Ersan-Urun Z."/>
            <person name="Eser C."/>
            <person name="Geiger H."/>
            <person name="Geisler M."/>
            <person name="Karotki L."/>
            <person name="Kirn A."/>
            <person name="Konantz J."/>
            <person name="Konantz M."/>
            <person name="Oberlander M."/>
            <person name="Rudolph-Geiger S."/>
            <person name="Teucke M."/>
            <person name="Lanz C."/>
            <person name="Raddatz G."/>
            <person name="Osoegawa K."/>
            <person name="Zhu B."/>
            <person name="Rapp A."/>
            <person name="Widaa S."/>
            <person name="Langford C."/>
            <person name="Yang F."/>
            <person name="Schuster S.C."/>
            <person name="Carter N.P."/>
            <person name="Harrow J."/>
            <person name="Ning Z."/>
            <person name="Herrero J."/>
            <person name="Searle S.M."/>
            <person name="Enright A."/>
            <person name="Geisler R."/>
            <person name="Plasterk R.H."/>
            <person name="Lee C."/>
            <person name="Westerfield M."/>
            <person name="de Jong P.J."/>
            <person name="Zon L.I."/>
            <person name="Postlethwait J.H."/>
            <person name="Nusslein-Volhard C."/>
            <person name="Hubbard T.J."/>
            <person name="Roest Crollius H."/>
            <person name="Rogers J."/>
            <person name="Stemple D.L."/>
        </authorList>
    </citation>
    <scope>NUCLEOTIDE SEQUENCE [LARGE SCALE GENOMIC DNA]</scope>
    <source>
        <strain>Tuebingen</strain>
    </source>
</reference>
<reference key="2">
    <citation type="submission" date="2006-12" db="EMBL/GenBank/DDBJ databases">
        <authorList>
            <consortium name="NIH - Zebrafish Gene Collection (ZGC) project"/>
        </authorList>
    </citation>
    <scope>NUCLEOTIDE SEQUENCE [LARGE SCALE MRNA] OF 1-682</scope>
    <source>
        <tissue>Olfactory epithelium</tissue>
    </source>
</reference>
<reference key="3">
    <citation type="journal article" date="2009" name="BMC Genomics">
        <title>Genome-wide loss-of-function analysis of deubiquitylating enzymes for zebrafish development.</title>
        <authorList>
            <person name="Tse W.K."/>
            <person name="Eisenhaber B."/>
            <person name="Ho S.H."/>
            <person name="Ng Q."/>
            <person name="Eisenhaber F."/>
            <person name="Jiang Y.J."/>
        </authorList>
    </citation>
    <scope>DISRUPTION PHENOTYPE</scope>
</reference>
<name>BAP1_DANRE</name>
<sequence length="755" mass="83777">MNKGWLELESDPGLFTLLVEDFGVKGVQVEEIYDLQSKCQSPVYGFIFLFKWIEERRSRRKVSTLVDETSVIDDDIVNDMFFAHQLIPNSCATHALLSVLLNCSGVELGMTLSRMKAFTKGFNPESKGYAIGNAPELAKAHNSHARPEPRHLPEKQNGISAVRTMEAFHFVSYVPIKDRLFELDGLKAYPIDHGPWGEDEEWTDKARRVIMERIGLATAGEPYHDIRFNLMAVVPDRRIKYESKLDILKRNRQIILEGLQQIREKKVIRMTQQESGQDRKQQDSSSSEDTPPVVKKEEVQETPIPSGAEQATPTEAQEGAASLPSPAGKVRSMAKPALPAGGAPPPAPLPAPSTNTIVQRLPAFLDNHNYAKSPMQEEEDLAAGVGRSRPPQPPYSDDEDDYDDEEEECSTAGVTNSRVRRKLGLRTRTMSRTAVGGVAAMEGQLALSVLAEKLKKEVQRKDALATTGSTPLNVRTEGRTGGISITSACQPSPTPSNESTDTASEIGSAFNSPLRSPARSQATTRPSSPVASHVGRVLFGEEEGLPRLDARHNRAVRDLGVLVSSTQLQLQEDGVIFALPPTEALEGLKKVGGVDKKKKEEASGPGGEEEVKEGPSVEMKAEDVKESVDVKPEKENLPTTDVENSTKPPGEKYTPKELLALLKYVEADIANYEVYLKEEVEKRKKYKIDDQRRTHNYDEFICTFISMLAQEGMLASLVEQNISVRRRQGVSIGRLHKQRKPDRRKRSRPYKAKRQ</sequence>